<name>RPOC_STRP6</name>
<sequence>MVDVNRFKSMQITLASPSKVRSWSYGEVKKPETINYRTLKPEREGLFDEVIFGPTKDWECACGKYKRIRYKGIVCDRCGVEVTRAKVRRERMGHIELKAPVSHIWYFKGIPSRMGLTLDMSPRALEEVIYFAAYVVIDPKDTPLEPKSLLTEREYREKLQEYGHGSFVAKMGAEAIQALLKRVDLAAEIAELKEELKSASGQKRIKAVRRLDVLDAFNKSGNKPEWMVLNILPVIPPDLRPMVQLDGGRFAASDLNDLYRRVINRNNRLARLLELNAPGIIVQNEKRMLQEAVDALIDNGRRGRPITGPGSRPLKSLSHMLKGKQGRFRQNLLGKRVDFSGRSVIAVGPTLKMYQCGVPREMAIELFKPFVMREIVAKEYAGNVKAAKRMVERGDERIWDILEEVIKEHPVLLNRAPTLHRLGIQAFEPVLIDGKALRLHPLVCEAYNADFDGDQMAIHVPLSEEAQAEARLLMLAAEHILNPKDGKPVVTPSQDMVLGNYYLTMEDAGREGEGMIFKDKDEAVMAYRNGYAHLHSRVGIAVDSMPNKPWKDNQRHKIMVTTVGKILFNDIMPEDLPYLQEPNNANLTEGTPDKYFLEPGQDIQEVIDGLEINVPFKKKNLGNIIAETFKRFRTTETSAFLDRLKDLGYYHSTLAGLTVGIADIPVIDNKAEIIDAAHHRVEEINKAFRRGLMTDDDRYVAVTTTWREAKEALEKRLIETQNPKNPIVMMMDSGARGNISNFSQLAGMRGLMAAPNGRIMELPILSNFREGLSVLEMFFSTHGARKGMTDTALKTADSGYLTRRLVDVAQDVIIREDDCGTDRGLLIRAITDGKEVTETLEERLQGRYTRKSVKHPETGEVLIGADQLITEDMARKIVDAGVEEVTIRSVFTCATRHGVCRHCYGINLATGDAVEVGEAVGTIAAQSIGEPGTQLTMRTFHTGGVASNTDITQGLPRIQEIFEARNPKGEAVITEVKGNVVEIEEDASTRTKKVYVQGKTGMGEYVVPFTARMKVEVGDEVNRGAALTEGSIQPKRLLEVRDTLSVETYLLAEVQKVYRSQGVEIGDKHVEVMVRQMLRKVRVMDPGDTDLLPGTLMDISDFTDANKDIVISGGIPATSRPVLMGITKASLETNSFLSAASFQETTRVLTDAAIRGKKDHLLGLKENVIIGKIIPAGTGMARYRNIEPQAMNEIEVIDHTEVSAEAVFTAEAE</sequence>
<evidence type="ECO:0000255" key="1">
    <source>
        <dbReference type="HAMAP-Rule" id="MF_01322"/>
    </source>
</evidence>
<protein>
    <recommendedName>
        <fullName evidence="1">DNA-directed RNA polymerase subunit beta'</fullName>
        <shortName evidence="1">RNAP subunit beta'</shortName>
        <ecNumber evidence="1">2.7.7.6</ecNumber>
    </recommendedName>
    <alternativeName>
        <fullName evidence="1">RNA polymerase subunit beta'</fullName>
    </alternativeName>
    <alternativeName>
        <fullName evidence="1">Transcriptase subunit beta'</fullName>
    </alternativeName>
</protein>
<keyword id="KW-0240">DNA-directed RNA polymerase</keyword>
<keyword id="KW-0460">Magnesium</keyword>
<keyword id="KW-0479">Metal-binding</keyword>
<keyword id="KW-0548">Nucleotidyltransferase</keyword>
<keyword id="KW-0804">Transcription</keyword>
<keyword id="KW-0808">Transferase</keyword>
<keyword id="KW-0862">Zinc</keyword>
<gene>
    <name evidence="1" type="primary">rpoC</name>
    <name type="ordered locus">M6_Spy0132</name>
</gene>
<comment type="function">
    <text evidence="1">DNA-dependent RNA polymerase catalyzes the transcription of DNA into RNA using the four ribonucleoside triphosphates as substrates.</text>
</comment>
<comment type="catalytic activity">
    <reaction evidence="1">
        <text>RNA(n) + a ribonucleoside 5'-triphosphate = RNA(n+1) + diphosphate</text>
        <dbReference type="Rhea" id="RHEA:21248"/>
        <dbReference type="Rhea" id="RHEA-COMP:14527"/>
        <dbReference type="Rhea" id="RHEA-COMP:17342"/>
        <dbReference type="ChEBI" id="CHEBI:33019"/>
        <dbReference type="ChEBI" id="CHEBI:61557"/>
        <dbReference type="ChEBI" id="CHEBI:140395"/>
        <dbReference type="EC" id="2.7.7.6"/>
    </reaction>
</comment>
<comment type="cofactor">
    <cofactor evidence="1">
        <name>Mg(2+)</name>
        <dbReference type="ChEBI" id="CHEBI:18420"/>
    </cofactor>
    <text evidence="1">Binds 1 Mg(2+) ion per subunit.</text>
</comment>
<comment type="cofactor">
    <cofactor evidence="1">
        <name>Zn(2+)</name>
        <dbReference type="ChEBI" id="CHEBI:29105"/>
    </cofactor>
    <text evidence="1">Binds 2 Zn(2+) ions per subunit.</text>
</comment>
<comment type="subunit">
    <text evidence="1">The RNAP catalytic core consists of 2 alpha, 1 beta, 1 beta' and 1 omega subunit. When a sigma factor is associated with the core the holoenzyme is formed, which can initiate transcription.</text>
</comment>
<comment type="similarity">
    <text evidence="1">Belongs to the RNA polymerase beta' chain family.</text>
</comment>
<dbReference type="EC" id="2.7.7.6" evidence="1"/>
<dbReference type="EMBL" id="CP000003">
    <property type="protein sequence ID" value="AAT86267.1"/>
    <property type="molecule type" value="Genomic_DNA"/>
</dbReference>
<dbReference type="RefSeq" id="WP_011184087.1">
    <property type="nucleotide sequence ID" value="NC_006086.1"/>
</dbReference>
<dbReference type="SMR" id="Q5XE96"/>
<dbReference type="KEGG" id="spa:M6_Spy0132"/>
<dbReference type="HOGENOM" id="CLU_000524_3_1_9"/>
<dbReference type="Proteomes" id="UP000001167">
    <property type="component" value="Chromosome"/>
</dbReference>
<dbReference type="GO" id="GO:0000428">
    <property type="term" value="C:DNA-directed RNA polymerase complex"/>
    <property type="evidence" value="ECO:0007669"/>
    <property type="project" value="UniProtKB-KW"/>
</dbReference>
<dbReference type="GO" id="GO:0003677">
    <property type="term" value="F:DNA binding"/>
    <property type="evidence" value="ECO:0007669"/>
    <property type="project" value="UniProtKB-UniRule"/>
</dbReference>
<dbReference type="GO" id="GO:0003899">
    <property type="term" value="F:DNA-directed RNA polymerase activity"/>
    <property type="evidence" value="ECO:0007669"/>
    <property type="project" value="UniProtKB-UniRule"/>
</dbReference>
<dbReference type="GO" id="GO:0000287">
    <property type="term" value="F:magnesium ion binding"/>
    <property type="evidence" value="ECO:0007669"/>
    <property type="project" value="UniProtKB-UniRule"/>
</dbReference>
<dbReference type="GO" id="GO:0008270">
    <property type="term" value="F:zinc ion binding"/>
    <property type="evidence" value="ECO:0007669"/>
    <property type="project" value="UniProtKB-UniRule"/>
</dbReference>
<dbReference type="GO" id="GO:0006351">
    <property type="term" value="P:DNA-templated transcription"/>
    <property type="evidence" value="ECO:0007669"/>
    <property type="project" value="UniProtKB-UniRule"/>
</dbReference>
<dbReference type="CDD" id="cd02655">
    <property type="entry name" value="RNAP_beta'_C"/>
    <property type="match status" value="1"/>
</dbReference>
<dbReference type="CDD" id="cd01609">
    <property type="entry name" value="RNAP_beta'_N"/>
    <property type="match status" value="1"/>
</dbReference>
<dbReference type="FunFam" id="1.10.150.390:FF:000002">
    <property type="entry name" value="DNA-directed RNA polymerase subunit beta"/>
    <property type="match status" value="1"/>
</dbReference>
<dbReference type="FunFam" id="4.10.860.120:FF:000001">
    <property type="entry name" value="DNA-directed RNA polymerase subunit beta"/>
    <property type="match status" value="1"/>
</dbReference>
<dbReference type="Gene3D" id="1.10.132.30">
    <property type="match status" value="1"/>
</dbReference>
<dbReference type="Gene3D" id="1.10.150.390">
    <property type="match status" value="1"/>
</dbReference>
<dbReference type="Gene3D" id="1.10.1790.20">
    <property type="match status" value="1"/>
</dbReference>
<dbReference type="Gene3D" id="1.10.40.90">
    <property type="match status" value="1"/>
</dbReference>
<dbReference type="Gene3D" id="2.40.40.20">
    <property type="match status" value="1"/>
</dbReference>
<dbReference type="Gene3D" id="2.40.50.100">
    <property type="match status" value="1"/>
</dbReference>
<dbReference type="Gene3D" id="4.10.860.120">
    <property type="entry name" value="RNA polymerase II, clamp domain"/>
    <property type="match status" value="1"/>
</dbReference>
<dbReference type="Gene3D" id="1.10.274.100">
    <property type="entry name" value="RNA polymerase Rpb1, domain 3"/>
    <property type="match status" value="1"/>
</dbReference>
<dbReference type="HAMAP" id="MF_01322">
    <property type="entry name" value="RNApol_bact_RpoC"/>
    <property type="match status" value="1"/>
</dbReference>
<dbReference type="InterPro" id="IPR045867">
    <property type="entry name" value="DNA-dir_RpoC_beta_prime"/>
</dbReference>
<dbReference type="InterPro" id="IPR012754">
    <property type="entry name" value="DNA-dir_RpoC_beta_prime_bact"/>
</dbReference>
<dbReference type="InterPro" id="IPR000722">
    <property type="entry name" value="RNA_pol_asu"/>
</dbReference>
<dbReference type="InterPro" id="IPR006592">
    <property type="entry name" value="RNA_pol_N"/>
</dbReference>
<dbReference type="InterPro" id="IPR007080">
    <property type="entry name" value="RNA_pol_Rpb1_1"/>
</dbReference>
<dbReference type="InterPro" id="IPR007066">
    <property type="entry name" value="RNA_pol_Rpb1_3"/>
</dbReference>
<dbReference type="InterPro" id="IPR042102">
    <property type="entry name" value="RNA_pol_Rpb1_3_sf"/>
</dbReference>
<dbReference type="InterPro" id="IPR007083">
    <property type="entry name" value="RNA_pol_Rpb1_4"/>
</dbReference>
<dbReference type="InterPro" id="IPR007081">
    <property type="entry name" value="RNA_pol_Rpb1_5"/>
</dbReference>
<dbReference type="InterPro" id="IPR044893">
    <property type="entry name" value="RNA_pol_Rpb1_clamp_domain"/>
</dbReference>
<dbReference type="InterPro" id="IPR038120">
    <property type="entry name" value="Rpb1_funnel_sf"/>
</dbReference>
<dbReference type="NCBIfam" id="TIGR02386">
    <property type="entry name" value="rpoC_TIGR"/>
    <property type="match status" value="1"/>
</dbReference>
<dbReference type="PANTHER" id="PTHR19376">
    <property type="entry name" value="DNA-DIRECTED RNA POLYMERASE"/>
    <property type="match status" value="1"/>
</dbReference>
<dbReference type="PANTHER" id="PTHR19376:SF54">
    <property type="entry name" value="DNA-DIRECTED RNA POLYMERASE SUBUNIT BETA"/>
    <property type="match status" value="1"/>
</dbReference>
<dbReference type="Pfam" id="PF04997">
    <property type="entry name" value="RNA_pol_Rpb1_1"/>
    <property type="match status" value="1"/>
</dbReference>
<dbReference type="Pfam" id="PF00623">
    <property type="entry name" value="RNA_pol_Rpb1_2"/>
    <property type="match status" value="2"/>
</dbReference>
<dbReference type="Pfam" id="PF04983">
    <property type="entry name" value="RNA_pol_Rpb1_3"/>
    <property type="match status" value="1"/>
</dbReference>
<dbReference type="Pfam" id="PF05000">
    <property type="entry name" value="RNA_pol_Rpb1_4"/>
    <property type="match status" value="1"/>
</dbReference>
<dbReference type="Pfam" id="PF04998">
    <property type="entry name" value="RNA_pol_Rpb1_5"/>
    <property type="match status" value="1"/>
</dbReference>
<dbReference type="SMART" id="SM00663">
    <property type="entry name" value="RPOLA_N"/>
    <property type="match status" value="1"/>
</dbReference>
<dbReference type="SUPFAM" id="SSF64484">
    <property type="entry name" value="beta and beta-prime subunits of DNA dependent RNA-polymerase"/>
    <property type="match status" value="1"/>
</dbReference>
<organism>
    <name type="scientific">Streptococcus pyogenes serotype M6 (strain ATCC BAA-946 / MGAS10394)</name>
    <dbReference type="NCBI Taxonomy" id="286636"/>
    <lineage>
        <taxon>Bacteria</taxon>
        <taxon>Bacillati</taxon>
        <taxon>Bacillota</taxon>
        <taxon>Bacilli</taxon>
        <taxon>Lactobacillales</taxon>
        <taxon>Streptococcaceae</taxon>
        <taxon>Streptococcus</taxon>
    </lineage>
</organism>
<reference key="1">
    <citation type="journal article" date="2004" name="J. Infect. Dis.">
        <title>Progress toward characterization of the group A Streptococcus metagenome: complete genome sequence of a macrolide-resistant serotype M6 strain.</title>
        <authorList>
            <person name="Banks D.J."/>
            <person name="Porcella S.F."/>
            <person name="Barbian K.D."/>
            <person name="Beres S.B."/>
            <person name="Philips L.E."/>
            <person name="Voyich J.M."/>
            <person name="DeLeo F.R."/>
            <person name="Martin J.M."/>
            <person name="Somerville G.A."/>
            <person name="Musser J.M."/>
        </authorList>
    </citation>
    <scope>NUCLEOTIDE SEQUENCE [LARGE SCALE GENOMIC DNA]</scope>
    <source>
        <strain>ATCC BAA-946 / MGAS10394</strain>
    </source>
</reference>
<accession>Q5XE96</accession>
<feature type="chain" id="PRO_0000067813" description="DNA-directed RNA polymerase subunit beta'">
    <location>
        <begin position="1"/>
        <end position="1213"/>
    </location>
</feature>
<feature type="binding site" evidence="1">
    <location>
        <position position="60"/>
    </location>
    <ligand>
        <name>Zn(2+)</name>
        <dbReference type="ChEBI" id="CHEBI:29105"/>
        <label>1</label>
    </ligand>
</feature>
<feature type="binding site" evidence="1">
    <location>
        <position position="62"/>
    </location>
    <ligand>
        <name>Zn(2+)</name>
        <dbReference type="ChEBI" id="CHEBI:29105"/>
        <label>1</label>
    </ligand>
</feature>
<feature type="binding site" evidence="1">
    <location>
        <position position="75"/>
    </location>
    <ligand>
        <name>Zn(2+)</name>
        <dbReference type="ChEBI" id="CHEBI:29105"/>
        <label>1</label>
    </ligand>
</feature>
<feature type="binding site" evidence="1">
    <location>
        <position position="78"/>
    </location>
    <ligand>
        <name>Zn(2+)</name>
        <dbReference type="ChEBI" id="CHEBI:29105"/>
        <label>1</label>
    </ligand>
</feature>
<feature type="binding site" evidence="1">
    <location>
        <position position="450"/>
    </location>
    <ligand>
        <name>Mg(2+)</name>
        <dbReference type="ChEBI" id="CHEBI:18420"/>
    </ligand>
</feature>
<feature type="binding site" evidence="1">
    <location>
        <position position="452"/>
    </location>
    <ligand>
        <name>Mg(2+)</name>
        <dbReference type="ChEBI" id="CHEBI:18420"/>
    </ligand>
</feature>
<feature type="binding site" evidence="1">
    <location>
        <position position="454"/>
    </location>
    <ligand>
        <name>Mg(2+)</name>
        <dbReference type="ChEBI" id="CHEBI:18420"/>
    </ligand>
</feature>
<feature type="binding site" evidence="1">
    <location>
        <position position="819"/>
    </location>
    <ligand>
        <name>Zn(2+)</name>
        <dbReference type="ChEBI" id="CHEBI:29105"/>
        <label>2</label>
    </ligand>
</feature>
<feature type="binding site" evidence="1">
    <location>
        <position position="893"/>
    </location>
    <ligand>
        <name>Zn(2+)</name>
        <dbReference type="ChEBI" id="CHEBI:29105"/>
        <label>2</label>
    </ligand>
</feature>
<feature type="binding site" evidence="1">
    <location>
        <position position="900"/>
    </location>
    <ligand>
        <name>Zn(2+)</name>
        <dbReference type="ChEBI" id="CHEBI:29105"/>
        <label>2</label>
    </ligand>
</feature>
<feature type="binding site" evidence="1">
    <location>
        <position position="903"/>
    </location>
    <ligand>
        <name>Zn(2+)</name>
        <dbReference type="ChEBI" id="CHEBI:29105"/>
        <label>2</label>
    </ligand>
</feature>
<proteinExistence type="inferred from homology"/>